<accession>Q7YQK4</accession>
<protein>
    <recommendedName>
        <fullName>Large neutral amino acids transporter small subunit 1</fullName>
    </recommendedName>
    <alternativeName>
        <fullName>4F2 light chain</fullName>
        <shortName>4F2 LC</shortName>
        <shortName>4F2LC</shortName>
    </alternativeName>
    <alternativeName>
        <fullName>L-type amino acid transporter 1</fullName>
    </alternativeName>
    <alternativeName>
        <fullName evidence="10">LAT1</fullName>
    </alternativeName>
    <alternativeName>
        <fullName>Solute carrier family 7 member 5</fullName>
    </alternativeName>
</protein>
<evidence type="ECO:0000250" key="1">
    <source>
        <dbReference type="UniProtKB" id="Q01650"/>
    </source>
</evidence>
<evidence type="ECO:0000250" key="2">
    <source>
        <dbReference type="UniProtKB" id="Q63016"/>
    </source>
</evidence>
<evidence type="ECO:0000250" key="3">
    <source>
        <dbReference type="UniProtKB" id="Q9Z127"/>
    </source>
</evidence>
<evidence type="ECO:0000255" key="4"/>
<evidence type="ECO:0000256" key="5">
    <source>
        <dbReference type="SAM" id="MobiDB-lite"/>
    </source>
</evidence>
<evidence type="ECO:0000269" key="6">
    <source>
    </source>
</evidence>
<evidence type="ECO:0000269" key="7">
    <source>
    </source>
</evidence>
<evidence type="ECO:0000269" key="8">
    <source>
    </source>
</evidence>
<evidence type="ECO:0000269" key="9">
    <source>
    </source>
</evidence>
<evidence type="ECO:0000303" key="10">
    <source>
    </source>
</evidence>
<evidence type="ECO:0000305" key="11"/>
<evidence type="ECO:0000305" key="12">
    <source>
    </source>
</evidence>
<evidence type="ECO:0000312" key="13">
    <source>
        <dbReference type="EMBL" id="AAP47189.1"/>
    </source>
</evidence>
<gene>
    <name evidence="1" type="primary">SLC7A5</name>
    <name evidence="10" type="synonym">LAT1</name>
</gene>
<dbReference type="EMBL" id="AF515772">
    <property type="protein sequence ID" value="AAP47189.1"/>
    <property type="molecule type" value="mRNA"/>
</dbReference>
<dbReference type="RefSeq" id="NP_001075589.1">
    <property type="nucleotide sequence ID" value="NM_001082120.1"/>
</dbReference>
<dbReference type="SMR" id="Q7YQK4"/>
<dbReference type="FunCoup" id="Q7YQK4">
    <property type="interactions" value="89"/>
</dbReference>
<dbReference type="PaxDb" id="9986-ENSOCUP00000025624"/>
<dbReference type="GeneID" id="100008844"/>
<dbReference type="KEGG" id="ocu:100008844"/>
<dbReference type="CTD" id="8140"/>
<dbReference type="eggNOG" id="KOG1287">
    <property type="taxonomic scope" value="Eukaryota"/>
</dbReference>
<dbReference type="InParanoid" id="Q7YQK4"/>
<dbReference type="OrthoDB" id="10062876at2759"/>
<dbReference type="SABIO-RK" id="Q7YQK4"/>
<dbReference type="Proteomes" id="UP000001811">
    <property type="component" value="Unplaced"/>
</dbReference>
<dbReference type="GO" id="GO:1990184">
    <property type="term" value="C:amino acid transport complex"/>
    <property type="evidence" value="ECO:0000250"/>
    <property type="project" value="UniProtKB"/>
</dbReference>
<dbReference type="GO" id="GO:0016324">
    <property type="term" value="C:apical plasma membrane"/>
    <property type="evidence" value="ECO:0000250"/>
    <property type="project" value="UniProtKB"/>
</dbReference>
<dbReference type="GO" id="GO:0005765">
    <property type="term" value="C:lysosomal membrane"/>
    <property type="evidence" value="ECO:0007669"/>
    <property type="project" value="UniProtKB-SubCell"/>
</dbReference>
<dbReference type="GO" id="GO:0016020">
    <property type="term" value="C:membrane"/>
    <property type="evidence" value="ECO:0000250"/>
    <property type="project" value="UniProtKB"/>
</dbReference>
<dbReference type="GO" id="GO:0005886">
    <property type="term" value="C:plasma membrane"/>
    <property type="evidence" value="ECO:0000250"/>
    <property type="project" value="UniProtKB"/>
</dbReference>
<dbReference type="GO" id="GO:0015171">
    <property type="term" value="F:amino acid transmembrane transporter activity"/>
    <property type="evidence" value="ECO:0000314"/>
    <property type="project" value="UniProtKB"/>
</dbReference>
<dbReference type="GO" id="GO:0015297">
    <property type="term" value="F:antiporter activity"/>
    <property type="evidence" value="ECO:0000250"/>
    <property type="project" value="UniProtKB"/>
</dbReference>
<dbReference type="GO" id="GO:0015190">
    <property type="term" value="F:L-leucine transmembrane transporter activity"/>
    <property type="evidence" value="ECO:0000250"/>
    <property type="project" value="UniProtKB"/>
</dbReference>
<dbReference type="GO" id="GO:0015196">
    <property type="term" value="F:L-tryptophan transmembrane transporter activity"/>
    <property type="evidence" value="ECO:0000250"/>
    <property type="project" value="UniProtKB"/>
</dbReference>
<dbReference type="GO" id="GO:0042605">
    <property type="term" value="F:peptide antigen binding"/>
    <property type="evidence" value="ECO:0000353"/>
    <property type="project" value="UniProtKB"/>
</dbReference>
<dbReference type="GO" id="GO:1904556">
    <property type="term" value="P:L-tryptophan transmembrane transport"/>
    <property type="evidence" value="ECO:0000250"/>
    <property type="project" value="UniProtKB"/>
</dbReference>
<dbReference type="GO" id="GO:0015804">
    <property type="term" value="P:neutral amino acid transport"/>
    <property type="evidence" value="ECO:0000314"/>
    <property type="project" value="UniProtKB"/>
</dbReference>
<dbReference type="GO" id="GO:0015823">
    <property type="term" value="P:phenylalanine transport"/>
    <property type="evidence" value="ECO:0000314"/>
    <property type="project" value="UniProtKB"/>
</dbReference>
<dbReference type="GO" id="GO:0015827">
    <property type="term" value="P:tryptophan transport"/>
    <property type="evidence" value="ECO:0000314"/>
    <property type="project" value="UniProtKB"/>
</dbReference>
<dbReference type="FunFam" id="1.20.1740.10:FF:000003">
    <property type="entry name" value="Y+L amino acid transporter 1 isoform X1"/>
    <property type="match status" value="1"/>
</dbReference>
<dbReference type="Gene3D" id="1.20.1740.10">
    <property type="entry name" value="Amino acid/polyamine transporter I"/>
    <property type="match status" value="1"/>
</dbReference>
<dbReference type="InterPro" id="IPR002293">
    <property type="entry name" value="AA/rel_permease1"/>
</dbReference>
<dbReference type="InterPro" id="IPR050598">
    <property type="entry name" value="AminoAcid_Transporter"/>
</dbReference>
<dbReference type="InterPro" id="IPR004760">
    <property type="entry name" value="L_AA_transporter"/>
</dbReference>
<dbReference type="NCBIfam" id="TIGR00911">
    <property type="entry name" value="2A0308"/>
    <property type="match status" value="1"/>
</dbReference>
<dbReference type="PANTHER" id="PTHR11785">
    <property type="entry name" value="AMINO ACID TRANSPORTER"/>
    <property type="match status" value="1"/>
</dbReference>
<dbReference type="PANTHER" id="PTHR11785:SF315">
    <property type="entry name" value="LARGE NEUTRAL AMINO ACIDS TRANSPORTER SMALL SUBUNIT 1"/>
    <property type="match status" value="1"/>
</dbReference>
<dbReference type="Pfam" id="PF13520">
    <property type="entry name" value="AA_permease_2"/>
    <property type="match status" value="1"/>
</dbReference>
<dbReference type="PIRSF" id="PIRSF006060">
    <property type="entry name" value="AA_transporter"/>
    <property type="match status" value="1"/>
</dbReference>
<reference evidence="11 13" key="1">
    <citation type="journal article" date="2003" name="J. Neurochem.">
        <title>Site-directed mutagenesis of rabbit LAT1 at amino acids 219 and 234.</title>
        <authorList>
            <person name="Boado R.J."/>
            <person name="Li J.Y."/>
            <person name="Pardridge W.M."/>
        </authorList>
    </citation>
    <scope>NUCLEOTIDE SEQUENCE [MRNA]</scope>
    <scope>FUNCTION</scope>
    <scope>SUBCELLULAR LOCATION</scope>
    <scope>SUBUNIT</scope>
    <scope>BIOPHYSICOCHEMICAL PROPERTIES</scope>
    <scope>MUTAGENESIS OF GLY-219 AND TRP-234</scope>
    <scope>TRANSPORTER ACTIVITY</scope>
    <source>
        <strain evidence="6">New Zealand</strain>
        <tissue evidence="6">Brain capillary</tissue>
    </source>
</reference>
<reference evidence="11" key="2">
    <citation type="journal article" date="2003" name="Invest. Ophthalmol. Vis. Sci.">
        <title>Identification and functional characterization of a Na+-independent large neutral amino acid transporter, LAT1, in human and rabbit cornea.</title>
        <authorList>
            <person name="Jain-Vakkalagadda B."/>
            <person name="Dey S."/>
            <person name="Pal D."/>
            <person name="Mitra A.K."/>
        </authorList>
    </citation>
    <scope>TISSUE SPECIFICITY</scope>
    <scope>FUNCTION</scope>
    <scope>TRANSPORTER ACTIVITY</scope>
    <scope>BIOPHYSICOCHEMICAL PROPERTIES</scope>
    <scope>ACTIVITY REGULATION</scope>
</reference>
<reference evidence="11" key="3">
    <citation type="journal article" date="2004" name="Pediatr. Res.">
        <title>Developmental regulation of the rabbit blood-brain barrier LAT1 large neutral amino acid transporter mRNA and protein.</title>
        <authorList>
            <person name="Boado R.J."/>
            <person name="Li J.Y."/>
            <person name="Pardridge W.M."/>
        </authorList>
    </citation>
    <scope>DEVELOPMENTAL STAGE</scope>
</reference>
<reference evidence="11" key="4">
    <citation type="journal article" date="2005" name="Biochim. Biophys. Acta">
        <title>Site-directed mutagenesis of cysteine residues of large neutral amino acid transporter LAT1.</title>
        <authorList>
            <person name="Boado R.J."/>
            <person name="Li J.Y."/>
            <person name="Chu C."/>
            <person name="Ogoshi F."/>
            <person name="Wise P."/>
            <person name="Pardridge W.M."/>
        </authorList>
    </citation>
    <scope>FUNCTION</scope>
    <scope>SUBCELLULAR LOCATION</scope>
    <scope>SUBUNIT</scope>
    <scope>BIOPHYSICOCHEMICAL PROPERTIES</scope>
    <scope>MUTAGENESIS OF CYS-88; CYS-98; CYS-160; CYS-172; CYS-174; CYS-183; CYS-331; CYS-377; CYS-403; CYS-439; CYS-454 AND CYS-492</scope>
    <scope>TRANSPORTER ACTIVITY</scope>
    <scope>ACTIVITY REGULATION</scope>
</reference>
<name>LAT1_RABIT</name>
<sequence length="503" mass="54783">MAGAGPKRRAAAAAAPEEERQAREKMLAARREAEAEGEGVALQRNITLLNGVAIIVGTIIGSGIFVTPTGVLKEAGSPGLSLVVWAVCGVFSIVGALCYAELGTTITKSGGDYAYMLEVYGSLPAFLKLWIELLIIRPSSQYIVALVFATYLLKPVFPTCPVPEEAAKLVACLCVLLLTAVNCYSVKAATRVQDAFAAAKLLALALIILLGFVQIGKGGVSNLDPKFSFEGTNWDVGNIVLALYSGLFAYGGWNYLNFVTEEMINPYRNLPLAIIISLPICTLVYVLTNLAYFTTLSPEQMLASEAVAVDFGNHHLGVMSWVIPVFVGLSCFGSVNGSLFTSSRLFFVGSREGHLPSVLSMIHPQLLTPVPSLVFTCAMTLLYAFSRDIFSVINFFSFFNWLCVALAIIGMMWLRYKKPELERPIKVNLALPVFFILACLFLIAVSFWKTPVECGIGFTIILSGLPVYFFGVWWKNKPKWLLQGIFSATALCQKLMQVVPQET</sequence>
<proteinExistence type="evidence at protein level"/>
<organism>
    <name type="scientific">Oryctolagus cuniculus</name>
    <name type="common">Rabbit</name>
    <dbReference type="NCBI Taxonomy" id="9986"/>
    <lineage>
        <taxon>Eukaryota</taxon>
        <taxon>Metazoa</taxon>
        <taxon>Chordata</taxon>
        <taxon>Craniata</taxon>
        <taxon>Vertebrata</taxon>
        <taxon>Euteleostomi</taxon>
        <taxon>Mammalia</taxon>
        <taxon>Eutheria</taxon>
        <taxon>Euarchontoglires</taxon>
        <taxon>Glires</taxon>
        <taxon>Lagomorpha</taxon>
        <taxon>Leporidae</taxon>
        <taxon>Oryctolagus</taxon>
    </lineage>
</organism>
<comment type="function">
    <text evidence="1 2 3 6 7 9">The heterodimer with SLC3A2 functions as a sodium-independent, high-affinity transporter that mediates uptake of large neutral amino acids such as tyrosine, L-DOPA, leucine, histidine, methionine, valine, isoleucine and alanine (By similarity). The heterodimer with SLC3A2 mediates the uptake of phenylalanine and tryptophan (PubMed:12614332, PubMed:12824232, PubMed:16125134). Functions as an amino acid exchanger (By similarity). May play a role in the transport of L-DOPA across the blood-brain barrier (By similarity). May act as the major transporter of tyrosine in fibroblasts (By similarity). May mediate blood-to-retina L-leucine transport across the inner blood-retinal barrier (By similarity). Can mediate the transport of thyroid hormones diiodothyronine (T2), triiodothyronine (T3) and thyroxine (T4) across the cell membrane. When associated with LAPTM4B, the heterodimer formed by SLC3A2 and SLC7A5 is recruited to lysosomes to promote leucine uptake into these organelles, and thereby mediates mTORC1 activation. Involved in the uptake of toxic methylmercury (MeHg) when administered as the L-cysteine or D,L-homocysteine complexes. Involved in the cellular activity of small molecular weight nitrosothiols, via the stereoselective transport of L-nitrosocysteine (L-CNSO) across the membrane (By similarity).</text>
</comment>
<comment type="catalytic activity">
    <reaction evidence="6 7 9">
        <text>L-phenylalanine(in) = L-phenylalanine(out)</text>
        <dbReference type="Rhea" id="RHEA:27950"/>
        <dbReference type="ChEBI" id="CHEBI:58095"/>
    </reaction>
    <physiologicalReaction direction="right-to-left" evidence="12">
        <dbReference type="Rhea" id="RHEA:27952"/>
    </physiologicalReaction>
</comment>
<comment type="catalytic activity">
    <reaction evidence="6">
        <text>L-tryptophan(in) = L-tryptophan(out)</text>
        <dbReference type="Rhea" id="RHEA:70947"/>
        <dbReference type="ChEBI" id="CHEBI:57912"/>
    </reaction>
    <physiologicalReaction direction="right-to-left" evidence="12">
        <dbReference type="Rhea" id="RHEA:70949"/>
    </physiologicalReaction>
</comment>
<comment type="catalytic activity">
    <reaction evidence="1">
        <text>L-histidine(out) = L-histidine(in)</text>
        <dbReference type="Rhea" id="RHEA:72807"/>
        <dbReference type="ChEBI" id="CHEBI:57595"/>
    </reaction>
</comment>
<comment type="catalytic activity">
    <reaction evidence="1">
        <text>L-leucine(in) = L-leucine(out)</text>
        <dbReference type="Rhea" id="RHEA:73011"/>
        <dbReference type="ChEBI" id="CHEBI:57427"/>
    </reaction>
    <physiologicalReaction direction="right-to-left" evidence="1">
        <dbReference type="Rhea" id="RHEA:73013"/>
    </physiologicalReaction>
</comment>
<comment type="catalytic activity">
    <reaction evidence="1">
        <text>L-isoleucine(in) = L-isoleucine(out)</text>
        <dbReference type="Rhea" id="RHEA:70943"/>
        <dbReference type="ChEBI" id="CHEBI:58045"/>
    </reaction>
    <physiologicalReaction direction="right-to-left" evidence="1">
        <dbReference type="Rhea" id="RHEA:70945"/>
    </physiologicalReaction>
</comment>
<comment type="catalytic activity">
    <reaction evidence="1">
        <text>L-valine(in) = L-valine(out)</text>
        <dbReference type="Rhea" id="RHEA:29703"/>
        <dbReference type="ChEBI" id="CHEBI:57762"/>
    </reaction>
    <physiologicalReaction direction="right-to-left" evidence="1">
        <dbReference type="Rhea" id="RHEA:29705"/>
    </physiologicalReaction>
</comment>
<comment type="catalytic activity">
    <reaction evidence="1">
        <text>L-tyrosine(in) = L-tyrosine(out)</text>
        <dbReference type="Rhea" id="RHEA:68572"/>
        <dbReference type="ChEBI" id="CHEBI:58315"/>
    </reaction>
    <physiologicalReaction direction="right-to-left" evidence="1">
        <dbReference type="Rhea" id="RHEA:68574"/>
    </physiologicalReaction>
</comment>
<comment type="catalytic activity">
    <reaction evidence="1">
        <text>L-methionine(in) = L-methionine(out)</text>
        <dbReference type="Rhea" id="RHEA:70939"/>
        <dbReference type="ChEBI" id="CHEBI:57844"/>
    </reaction>
    <physiologicalReaction direction="right-to-left" evidence="1">
        <dbReference type="Rhea" id="RHEA:70941"/>
    </physiologicalReaction>
</comment>
<comment type="catalytic activity">
    <reaction evidence="1">
        <text>L-alanine(in) = L-alanine(out)</text>
        <dbReference type="Rhea" id="RHEA:70719"/>
        <dbReference type="ChEBI" id="CHEBI:57972"/>
    </reaction>
    <physiologicalReaction direction="right-to-left" evidence="1">
        <dbReference type="Rhea" id="RHEA:70721"/>
    </physiologicalReaction>
</comment>
<comment type="catalytic activity">
    <reaction evidence="1">
        <text>3,3'-diiodo-L-thyronine(out) = 3,3'-diiodo-L-thyronine(in)</text>
        <dbReference type="Rhea" id="RHEA:71823"/>
        <dbReference type="ChEBI" id="CHEBI:176514"/>
    </reaction>
</comment>
<comment type="catalytic activity">
    <reaction evidence="1">
        <text>3,3',5-triiodo-L-thyronine(out) = 3,3',5-triiodo-L-thyronine(in)</text>
        <dbReference type="Rhea" id="RHEA:71811"/>
        <dbReference type="ChEBI" id="CHEBI:533015"/>
    </reaction>
</comment>
<comment type="catalytic activity">
    <reaction evidence="1">
        <text>L-thyroxine(out) = L-thyroxine(in)</text>
        <dbReference type="Rhea" id="RHEA:71819"/>
        <dbReference type="ChEBI" id="CHEBI:58448"/>
    </reaction>
</comment>
<comment type="activity regulation">
    <text evidence="7 9">Phenylalanine transport is inhibited by mercury, L-alanine and charged amino acids.</text>
</comment>
<comment type="biophysicochemical properties">
    <kinetics>
        <KM evidence="6">27 uM for phenylalanine (in frog oocytes)</KM>
        <KM evidence="7">33 uM for phenylalanine</KM>
        <KM evidence="9">19.8 uM for phenylalanine (in frog oocytes)</KM>
        <KM evidence="6">47.8 uM for tryptophan (in frog oocytes)</KM>
        <Vmax evidence="7">0.26 nmol/min/mg enzyme for phenylalanine</Vmax>
        <text>Km value in PubMed:12614332 was determined for the heterodimer of SLC7A5/LAT1 and SLC3A2/4F2hc.</text>
    </kinetics>
</comment>
<comment type="subunit">
    <text evidence="1 9 12">Disulfide-linked heterodimer with the amino acid transport protein SLC3A2/4F2hc (Probable) (PubMed:16125134). Interacts with LAPTM4B; this recruits the heterodimer formed by SLC3A2 and SLC7A5 to lysosomes to promote leucine uptake into these organelles and is required for mTORC1 activation (By similarity).</text>
</comment>
<comment type="subcellular location">
    <subcellularLocation>
        <location evidence="1">Apical cell membrane</location>
        <topology evidence="1">Multi-pass membrane protein</topology>
    </subcellularLocation>
    <subcellularLocation>
        <location evidence="6 9">Cell membrane</location>
        <topology evidence="1">Multi-pass membrane protein</topology>
    </subcellularLocation>
    <subcellularLocation>
        <location evidence="1">Lysosome membrane</location>
        <topology evidence="1">Multi-pass membrane protein</topology>
    </subcellularLocation>
    <text evidence="1 2">Located to the plasma membrane by SLC3A2/4F2hc. Localized to the apical membrane of placental syncytiotrophoblastic cells. Recruited to lysosomes by LAPTM4B (By similarity). Expressed in both luminal and abluminal membranes of brain capillary endothelial cells (By similarity).</text>
</comment>
<comment type="tissue specificity">
    <text evidence="7">Expression detected in cornea.</text>
</comment>
<comment type="developmental stage">
    <text evidence="8">Levels remain unchanged during postnatal development (at protein level).</text>
</comment>
<comment type="similarity">
    <text evidence="4">Belongs to the amino acid-polyamine-organocation (APC) superfamily. L-type amino acid transporter (LAT) (TC 2.A.3.8) family.</text>
</comment>
<keyword id="KW-0029">Amino-acid transport</keyword>
<keyword id="KW-1003">Cell membrane</keyword>
<keyword id="KW-1015">Disulfide bond</keyword>
<keyword id="KW-0458">Lysosome</keyword>
<keyword id="KW-0472">Membrane</keyword>
<keyword id="KW-1185">Reference proteome</keyword>
<keyword id="KW-0812">Transmembrane</keyword>
<keyword id="KW-1133">Transmembrane helix</keyword>
<keyword id="KW-0813">Transport</keyword>
<feature type="chain" id="PRO_0000252233" description="Large neutral amino acids transporter small subunit 1">
    <location>
        <begin position="1"/>
        <end position="503"/>
    </location>
</feature>
<feature type="topological domain" description="Cytoplasmic" evidence="11">
    <location>
        <begin position="1"/>
        <end position="45"/>
    </location>
</feature>
<feature type="transmembrane region" description="Helical" evidence="1">
    <location>
        <begin position="46"/>
        <end position="66"/>
    </location>
</feature>
<feature type="topological domain" description="Extracellular" evidence="11">
    <location>
        <begin position="67"/>
        <end position="79"/>
    </location>
</feature>
<feature type="transmembrane region" description="Helical" evidence="1">
    <location>
        <begin position="80"/>
        <end position="100"/>
    </location>
</feature>
<feature type="topological domain" description="Cytoplasmic" evidence="11">
    <location>
        <begin position="101"/>
        <end position="122"/>
    </location>
</feature>
<feature type="transmembrane region" description="Helical" evidence="1">
    <location>
        <begin position="123"/>
        <end position="143"/>
    </location>
</feature>
<feature type="topological domain" description="Extracellular" evidence="11">
    <location>
        <begin position="144"/>
        <end position="165"/>
    </location>
</feature>
<feature type="transmembrane region" description="Helical" evidence="1">
    <location>
        <begin position="166"/>
        <end position="186"/>
    </location>
</feature>
<feature type="topological domain" description="Cytoplasmic" evidence="11">
    <location>
        <begin position="187"/>
        <end position="188"/>
    </location>
</feature>
<feature type="transmembrane region" description="Helical" evidence="1">
    <location>
        <begin position="189"/>
        <end position="210"/>
    </location>
</feature>
<feature type="topological domain" description="Extracellular" evidence="11">
    <location>
        <begin position="211"/>
        <end position="238"/>
    </location>
</feature>
<feature type="transmembrane region" description="Helical" evidence="1">
    <location>
        <begin position="239"/>
        <end position="259"/>
    </location>
</feature>
<feature type="topological domain" description="Cytoplasmic" evidence="11">
    <location>
        <begin position="260"/>
        <end position="272"/>
    </location>
</feature>
<feature type="transmembrane region" description="Helical" evidence="1">
    <location>
        <begin position="273"/>
        <end position="293"/>
    </location>
</feature>
<feature type="topological domain" description="Extracellular" evidence="11">
    <location>
        <begin position="294"/>
        <end position="320"/>
    </location>
</feature>
<feature type="transmembrane region" description="Helical" evidence="1">
    <location>
        <begin position="321"/>
        <end position="341"/>
    </location>
</feature>
<feature type="topological domain" description="Cytoplasmic" evidence="11">
    <location>
        <begin position="342"/>
        <end position="365"/>
    </location>
</feature>
<feature type="transmembrane region" description="Helical" evidence="1">
    <location>
        <begin position="366"/>
        <end position="386"/>
    </location>
</feature>
<feature type="topological domain" description="Extracellular" evidence="11">
    <location>
        <begin position="387"/>
        <end position="391"/>
    </location>
</feature>
<feature type="transmembrane region" description="Helical" evidence="1">
    <location>
        <begin position="392"/>
        <end position="412"/>
    </location>
</feature>
<feature type="topological domain" description="Cytoplasmic" evidence="11">
    <location>
        <begin position="413"/>
        <end position="426"/>
    </location>
</feature>
<feature type="transmembrane region" description="Helical" evidence="1">
    <location>
        <begin position="427"/>
        <end position="447"/>
    </location>
</feature>
<feature type="topological domain" description="Extracellular" evidence="11">
    <location>
        <begin position="448"/>
        <end position="453"/>
    </location>
</feature>
<feature type="transmembrane region" description="Helical" evidence="1">
    <location>
        <begin position="454"/>
        <end position="474"/>
    </location>
</feature>
<feature type="topological domain" description="Cytoplasmic" evidence="11">
    <location>
        <begin position="475"/>
        <end position="503"/>
    </location>
</feature>
<feature type="region of interest" description="Disordered" evidence="5">
    <location>
        <begin position="1"/>
        <end position="20"/>
    </location>
</feature>
<feature type="compositionally biased region" description="Basic residues" evidence="5">
    <location>
        <begin position="1"/>
        <end position="10"/>
    </location>
</feature>
<feature type="disulfide bond" description="Interchain (with C-210 in SLC3A2)" evidence="1">
    <location>
        <position position="160"/>
    </location>
</feature>
<feature type="mutagenesis site" description="No significant effect on inhibition by HgCl(2). Decreased KM and Vmax for Phe. Similar affect on KM and Vmax for Phe; when associated with S-183." evidence="9">
    <original>C</original>
    <variation>S</variation>
    <location>
        <position position="88"/>
    </location>
</feature>
<feature type="mutagenesis site" description="No significant effect on inhibition by HgCl(2). Slightly decreased KM and Vmax for Phe. Slightly less decreased KM and Vmax for Phe; when associated with S-183." evidence="9">
    <original>C</original>
    <variation>S</variation>
    <location>
        <position position="98"/>
    </location>
</feature>
<feature type="mutagenesis site" description="No change to KM or Vmax for Phe." evidence="9">
    <original>C</original>
    <variation>S</variation>
    <location>
        <position position="160"/>
    </location>
</feature>
<feature type="mutagenesis site" description="No change to KM or Vmax for Phe." evidence="9">
    <original>C</original>
    <variation>S</variation>
    <location>
        <position position="172"/>
    </location>
</feature>
<feature type="mutagenesis site" description="No change to KM or Vmax for Phe." evidence="9">
    <original>C</original>
    <variation>S</variation>
    <location>
        <position position="174"/>
    </location>
</feature>
<feature type="mutagenesis site" description="No significant effect on inhibition by HgCl(2). Slightly decreased KM and Vmax for Phe. Similar affect on KM and Vmax for Phe; when associated with S-88. Slightly less decreased KM and Vmax for Phe; when associated with S-98." evidence="9">
    <original>C</original>
    <variation>S</variation>
    <location>
        <position position="183"/>
    </location>
</feature>
<feature type="mutagenesis site" description="Decreased KM and Vmax for Trp. Increased KM and Vmax for Phe; when associated with L-234." evidence="6">
    <original>G</original>
    <variation>D</variation>
    <location>
        <position position="219"/>
    </location>
</feature>
<feature type="mutagenesis site" description="Decreased KM and Vmax for Trp. Increased KM but decreased Vmax for Phe. Increased KM and Vmax for Phe; when associated with D-219." evidence="6">
    <original>W</original>
    <variation>L</variation>
    <location>
        <position position="234"/>
    </location>
</feature>
<feature type="mutagenesis site" description="No significant effect on inhibition by HgCl(2). Increased KM and Vmax for Phe." evidence="9">
    <original>C</original>
    <variation>S</variation>
    <location>
        <position position="331"/>
    </location>
</feature>
<feature type="mutagenesis site" description="No significant effect on inhibition by HgCl(2)." evidence="9">
    <original>C</original>
    <variation>S</variation>
    <location>
        <position position="377"/>
    </location>
</feature>
<feature type="mutagenesis site" description="No significant effect on inhibition by HgCl(2)." evidence="9">
    <original>C</original>
    <variation>S</variation>
    <location>
        <position position="403"/>
    </location>
</feature>
<feature type="mutagenesis site" description="Prevents insertion into the plasma membrane and possibly protein folding." evidence="9">
    <original>C</original>
    <variation>S</variation>
    <location>
        <position position="439"/>
    </location>
</feature>
<feature type="mutagenesis site" description="No significant effect on inhibition by HgCl(2). Slightly increased KM but slightly decreased Vmax for Phe." evidence="9">
    <original>C</original>
    <variation>S</variation>
    <location>
        <position position="454"/>
    </location>
</feature>
<feature type="mutagenesis site" description="No significant effect on inhibition by HgCl(2). Slightly decreased KM and Vmax for Phe." evidence="9">
    <original>C</original>
    <variation>S</variation>
    <location>
        <position position="492"/>
    </location>
</feature>